<protein>
    <recommendedName>
        <fullName evidence="1">NAD kinase</fullName>
        <ecNumber evidence="1">2.7.1.23</ecNumber>
    </recommendedName>
    <alternativeName>
        <fullName evidence="1">ATP-dependent NAD kinase</fullName>
    </alternativeName>
</protein>
<proteinExistence type="inferred from homology"/>
<evidence type="ECO:0000255" key="1">
    <source>
        <dbReference type="HAMAP-Rule" id="MF_00361"/>
    </source>
</evidence>
<accession>B5F295</accession>
<sequence length="292" mass="32584">MNNHFKCIGIVGHPRHPTALTTHEMLYRWLCDQGYEVIVEQQIAHELQLKNVPTGTLAEIGQQADLAVVVGGDGNMLGAARTLARYDINVIGINRGNLGFLTDLDPDNALQQLSDVLEGRYISEKRFLLEAQVCQQDRQKRISTAINEVVLHPGKVAHMIEFEVYIDETFAFSQRSDGLIISTPTGSTAYSLSAGGPILTPSLDAITLVPMFPHTLSARPLVINSSSTIRLRFSHRRSDLEISCDSQIALPIQEGEDVLIRRCDYHLNLIHPKDYSYFNTLSTKLGWSKKLF</sequence>
<comment type="function">
    <text evidence="1">Involved in the regulation of the intracellular balance of NAD and NADP, and is a key enzyme in the biosynthesis of NADP. Catalyzes specifically the phosphorylation on 2'-hydroxyl of the adenosine moiety of NAD to yield NADP.</text>
</comment>
<comment type="catalytic activity">
    <reaction evidence="1">
        <text>NAD(+) + ATP = ADP + NADP(+) + H(+)</text>
        <dbReference type="Rhea" id="RHEA:18629"/>
        <dbReference type="ChEBI" id="CHEBI:15378"/>
        <dbReference type="ChEBI" id="CHEBI:30616"/>
        <dbReference type="ChEBI" id="CHEBI:57540"/>
        <dbReference type="ChEBI" id="CHEBI:58349"/>
        <dbReference type="ChEBI" id="CHEBI:456216"/>
        <dbReference type="EC" id="2.7.1.23"/>
    </reaction>
</comment>
<comment type="cofactor">
    <cofactor evidence="1">
        <name>a divalent metal cation</name>
        <dbReference type="ChEBI" id="CHEBI:60240"/>
    </cofactor>
</comment>
<comment type="subcellular location">
    <subcellularLocation>
        <location evidence="1">Cytoplasm</location>
    </subcellularLocation>
</comment>
<comment type="similarity">
    <text evidence="1">Belongs to the NAD kinase family.</text>
</comment>
<name>NADK_SALA4</name>
<gene>
    <name evidence="1" type="primary">nadK</name>
    <name type="ordered locus">SeAg_B2827</name>
</gene>
<dbReference type="EC" id="2.7.1.23" evidence="1"/>
<dbReference type="EMBL" id="CP001138">
    <property type="protein sequence ID" value="ACH52709.1"/>
    <property type="molecule type" value="Genomic_DNA"/>
</dbReference>
<dbReference type="RefSeq" id="WP_001059155.1">
    <property type="nucleotide sequence ID" value="NC_011149.1"/>
</dbReference>
<dbReference type="SMR" id="B5F295"/>
<dbReference type="KEGG" id="sea:SeAg_B2827"/>
<dbReference type="HOGENOM" id="CLU_008831_0_1_6"/>
<dbReference type="Proteomes" id="UP000008819">
    <property type="component" value="Chromosome"/>
</dbReference>
<dbReference type="GO" id="GO:0005737">
    <property type="term" value="C:cytoplasm"/>
    <property type="evidence" value="ECO:0007669"/>
    <property type="project" value="UniProtKB-SubCell"/>
</dbReference>
<dbReference type="GO" id="GO:0005524">
    <property type="term" value="F:ATP binding"/>
    <property type="evidence" value="ECO:0007669"/>
    <property type="project" value="UniProtKB-KW"/>
</dbReference>
<dbReference type="GO" id="GO:0046872">
    <property type="term" value="F:metal ion binding"/>
    <property type="evidence" value="ECO:0007669"/>
    <property type="project" value="UniProtKB-UniRule"/>
</dbReference>
<dbReference type="GO" id="GO:0051287">
    <property type="term" value="F:NAD binding"/>
    <property type="evidence" value="ECO:0007669"/>
    <property type="project" value="UniProtKB-ARBA"/>
</dbReference>
<dbReference type="GO" id="GO:0003951">
    <property type="term" value="F:NAD+ kinase activity"/>
    <property type="evidence" value="ECO:0007669"/>
    <property type="project" value="UniProtKB-UniRule"/>
</dbReference>
<dbReference type="GO" id="GO:0019674">
    <property type="term" value="P:NAD metabolic process"/>
    <property type="evidence" value="ECO:0007669"/>
    <property type="project" value="InterPro"/>
</dbReference>
<dbReference type="GO" id="GO:0006741">
    <property type="term" value="P:NADP biosynthetic process"/>
    <property type="evidence" value="ECO:0007669"/>
    <property type="project" value="UniProtKB-UniRule"/>
</dbReference>
<dbReference type="FunFam" id="2.60.200.30:FF:000001">
    <property type="entry name" value="NAD kinase"/>
    <property type="match status" value="1"/>
</dbReference>
<dbReference type="FunFam" id="3.40.50.10330:FF:000004">
    <property type="entry name" value="NAD kinase"/>
    <property type="match status" value="1"/>
</dbReference>
<dbReference type="Gene3D" id="3.40.50.10330">
    <property type="entry name" value="Probable inorganic polyphosphate/atp-NAD kinase, domain 1"/>
    <property type="match status" value="1"/>
</dbReference>
<dbReference type="Gene3D" id="2.60.200.30">
    <property type="entry name" value="Probable inorganic polyphosphate/atp-NAD kinase, domain 2"/>
    <property type="match status" value="1"/>
</dbReference>
<dbReference type="HAMAP" id="MF_00361">
    <property type="entry name" value="NAD_kinase"/>
    <property type="match status" value="1"/>
</dbReference>
<dbReference type="InterPro" id="IPR017438">
    <property type="entry name" value="ATP-NAD_kinase_N"/>
</dbReference>
<dbReference type="InterPro" id="IPR017437">
    <property type="entry name" value="ATP-NAD_kinase_PpnK-typ_C"/>
</dbReference>
<dbReference type="InterPro" id="IPR016064">
    <property type="entry name" value="NAD/diacylglycerol_kinase_sf"/>
</dbReference>
<dbReference type="InterPro" id="IPR002504">
    <property type="entry name" value="NADK"/>
</dbReference>
<dbReference type="NCBIfam" id="NF002306">
    <property type="entry name" value="PRK01231.1"/>
    <property type="match status" value="1"/>
</dbReference>
<dbReference type="NCBIfam" id="NF002893">
    <property type="entry name" value="PRK03378.1"/>
    <property type="match status" value="1"/>
</dbReference>
<dbReference type="PANTHER" id="PTHR20275">
    <property type="entry name" value="NAD KINASE"/>
    <property type="match status" value="1"/>
</dbReference>
<dbReference type="PANTHER" id="PTHR20275:SF0">
    <property type="entry name" value="NAD KINASE"/>
    <property type="match status" value="1"/>
</dbReference>
<dbReference type="Pfam" id="PF01513">
    <property type="entry name" value="NAD_kinase"/>
    <property type="match status" value="1"/>
</dbReference>
<dbReference type="Pfam" id="PF20143">
    <property type="entry name" value="NAD_kinase_C"/>
    <property type="match status" value="1"/>
</dbReference>
<dbReference type="SUPFAM" id="SSF111331">
    <property type="entry name" value="NAD kinase/diacylglycerol kinase-like"/>
    <property type="match status" value="1"/>
</dbReference>
<feature type="chain" id="PRO_1000120880" description="NAD kinase">
    <location>
        <begin position="1"/>
        <end position="292"/>
    </location>
</feature>
<feature type="active site" description="Proton acceptor" evidence="1">
    <location>
        <position position="73"/>
    </location>
</feature>
<feature type="binding site" evidence="1">
    <location>
        <begin position="73"/>
        <end position="74"/>
    </location>
    <ligand>
        <name>NAD(+)</name>
        <dbReference type="ChEBI" id="CHEBI:57540"/>
    </ligand>
</feature>
<feature type="binding site" evidence="1">
    <location>
        <begin position="147"/>
        <end position="148"/>
    </location>
    <ligand>
        <name>NAD(+)</name>
        <dbReference type="ChEBI" id="CHEBI:57540"/>
    </ligand>
</feature>
<feature type="binding site" evidence="1">
    <location>
        <position position="158"/>
    </location>
    <ligand>
        <name>NAD(+)</name>
        <dbReference type="ChEBI" id="CHEBI:57540"/>
    </ligand>
</feature>
<feature type="binding site" evidence="1">
    <location>
        <position position="175"/>
    </location>
    <ligand>
        <name>NAD(+)</name>
        <dbReference type="ChEBI" id="CHEBI:57540"/>
    </ligand>
</feature>
<feature type="binding site" evidence="1">
    <location>
        <position position="177"/>
    </location>
    <ligand>
        <name>NAD(+)</name>
        <dbReference type="ChEBI" id="CHEBI:57540"/>
    </ligand>
</feature>
<feature type="binding site" evidence="1">
    <location>
        <begin position="188"/>
        <end position="193"/>
    </location>
    <ligand>
        <name>NAD(+)</name>
        <dbReference type="ChEBI" id="CHEBI:57540"/>
    </ligand>
</feature>
<feature type="binding site" evidence="1">
    <location>
        <position position="247"/>
    </location>
    <ligand>
        <name>NAD(+)</name>
        <dbReference type="ChEBI" id="CHEBI:57540"/>
    </ligand>
</feature>
<organism>
    <name type="scientific">Salmonella agona (strain SL483)</name>
    <dbReference type="NCBI Taxonomy" id="454166"/>
    <lineage>
        <taxon>Bacteria</taxon>
        <taxon>Pseudomonadati</taxon>
        <taxon>Pseudomonadota</taxon>
        <taxon>Gammaproteobacteria</taxon>
        <taxon>Enterobacterales</taxon>
        <taxon>Enterobacteriaceae</taxon>
        <taxon>Salmonella</taxon>
    </lineage>
</organism>
<keyword id="KW-0067">ATP-binding</keyword>
<keyword id="KW-0963">Cytoplasm</keyword>
<keyword id="KW-0418">Kinase</keyword>
<keyword id="KW-0520">NAD</keyword>
<keyword id="KW-0521">NADP</keyword>
<keyword id="KW-0547">Nucleotide-binding</keyword>
<keyword id="KW-0808">Transferase</keyword>
<reference key="1">
    <citation type="journal article" date="2011" name="J. Bacteriol.">
        <title>Comparative genomics of 28 Salmonella enterica isolates: evidence for CRISPR-mediated adaptive sublineage evolution.</title>
        <authorList>
            <person name="Fricke W.F."/>
            <person name="Mammel M.K."/>
            <person name="McDermott P.F."/>
            <person name="Tartera C."/>
            <person name="White D.G."/>
            <person name="Leclerc J.E."/>
            <person name="Ravel J."/>
            <person name="Cebula T.A."/>
        </authorList>
    </citation>
    <scope>NUCLEOTIDE SEQUENCE [LARGE SCALE GENOMIC DNA]</scope>
    <source>
        <strain>SL483</strain>
    </source>
</reference>